<organism>
    <name type="scientific">Salmonella enteritidis PT4 (strain P125109)</name>
    <dbReference type="NCBI Taxonomy" id="550537"/>
    <lineage>
        <taxon>Bacteria</taxon>
        <taxon>Pseudomonadati</taxon>
        <taxon>Pseudomonadota</taxon>
        <taxon>Gammaproteobacteria</taxon>
        <taxon>Enterobacterales</taxon>
        <taxon>Enterobacteriaceae</taxon>
        <taxon>Salmonella</taxon>
    </lineage>
</organism>
<proteinExistence type="inferred from homology"/>
<reference key="1">
    <citation type="journal article" date="2008" name="Genome Res.">
        <title>Comparative genome analysis of Salmonella enteritidis PT4 and Salmonella gallinarum 287/91 provides insights into evolutionary and host adaptation pathways.</title>
        <authorList>
            <person name="Thomson N.R."/>
            <person name="Clayton D.J."/>
            <person name="Windhorst D."/>
            <person name="Vernikos G."/>
            <person name="Davidson S."/>
            <person name="Churcher C."/>
            <person name="Quail M.A."/>
            <person name="Stevens M."/>
            <person name="Jones M.A."/>
            <person name="Watson M."/>
            <person name="Barron A."/>
            <person name="Layton A."/>
            <person name="Pickard D."/>
            <person name="Kingsley R.A."/>
            <person name="Bignell A."/>
            <person name="Clark L."/>
            <person name="Harris B."/>
            <person name="Ormond D."/>
            <person name="Abdellah Z."/>
            <person name="Brooks K."/>
            <person name="Cherevach I."/>
            <person name="Chillingworth T."/>
            <person name="Woodward J."/>
            <person name="Norberczak H."/>
            <person name="Lord A."/>
            <person name="Arrowsmith C."/>
            <person name="Jagels K."/>
            <person name="Moule S."/>
            <person name="Mungall K."/>
            <person name="Saunders M."/>
            <person name="Whitehead S."/>
            <person name="Chabalgoity J.A."/>
            <person name="Maskell D."/>
            <person name="Humphreys T."/>
            <person name="Roberts M."/>
            <person name="Barrow P.A."/>
            <person name="Dougan G."/>
            <person name="Parkhill J."/>
        </authorList>
    </citation>
    <scope>NUCLEOTIDE SEQUENCE [LARGE SCALE GENOMIC DNA]</scope>
    <source>
        <strain>P125109</strain>
    </source>
</reference>
<accession>B5QUQ5</accession>
<feature type="chain" id="PRO_1000197059" description="tRNA modification GTPase MnmE">
    <location>
        <begin position="1"/>
        <end position="454"/>
    </location>
</feature>
<feature type="domain" description="TrmE-type G">
    <location>
        <begin position="216"/>
        <end position="377"/>
    </location>
</feature>
<feature type="binding site" evidence="1">
    <location>
        <position position="23"/>
    </location>
    <ligand>
        <name>(6S)-5-formyl-5,6,7,8-tetrahydrofolate</name>
        <dbReference type="ChEBI" id="CHEBI:57457"/>
    </ligand>
</feature>
<feature type="binding site" evidence="1">
    <location>
        <position position="80"/>
    </location>
    <ligand>
        <name>(6S)-5-formyl-5,6,7,8-tetrahydrofolate</name>
        <dbReference type="ChEBI" id="CHEBI:57457"/>
    </ligand>
</feature>
<feature type="binding site" evidence="1">
    <location>
        <position position="120"/>
    </location>
    <ligand>
        <name>(6S)-5-formyl-5,6,7,8-tetrahydrofolate</name>
        <dbReference type="ChEBI" id="CHEBI:57457"/>
    </ligand>
</feature>
<feature type="binding site" evidence="1">
    <location>
        <begin position="226"/>
        <end position="231"/>
    </location>
    <ligand>
        <name>GTP</name>
        <dbReference type="ChEBI" id="CHEBI:37565"/>
    </ligand>
</feature>
<feature type="binding site" evidence="1">
    <location>
        <position position="226"/>
    </location>
    <ligand>
        <name>K(+)</name>
        <dbReference type="ChEBI" id="CHEBI:29103"/>
    </ligand>
</feature>
<feature type="binding site" evidence="1">
    <location>
        <position position="230"/>
    </location>
    <ligand>
        <name>Mg(2+)</name>
        <dbReference type="ChEBI" id="CHEBI:18420"/>
    </ligand>
</feature>
<feature type="binding site" evidence="1">
    <location>
        <begin position="245"/>
        <end position="251"/>
    </location>
    <ligand>
        <name>GTP</name>
        <dbReference type="ChEBI" id="CHEBI:37565"/>
    </ligand>
</feature>
<feature type="binding site" evidence="1">
    <location>
        <position position="245"/>
    </location>
    <ligand>
        <name>K(+)</name>
        <dbReference type="ChEBI" id="CHEBI:29103"/>
    </ligand>
</feature>
<feature type="binding site" evidence="1">
    <location>
        <position position="247"/>
    </location>
    <ligand>
        <name>K(+)</name>
        <dbReference type="ChEBI" id="CHEBI:29103"/>
    </ligand>
</feature>
<feature type="binding site" evidence="1">
    <location>
        <position position="250"/>
    </location>
    <ligand>
        <name>K(+)</name>
        <dbReference type="ChEBI" id="CHEBI:29103"/>
    </ligand>
</feature>
<feature type="binding site" evidence="1">
    <location>
        <position position="251"/>
    </location>
    <ligand>
        <name>Mg(2+)</name>
        <dbReference type="ChEBI" id="CHEBI:18420"/>
    </ligand>
</feature>
<feature type="binding site" evidence="1">
    <location>
        <begin position="270"/>
        <end position="273"/>
    </location>
    <ligand>
        <name>GTP</name>
        <dbReference type="ChEBI" id="CHEBI:37565"/>
    </ligand>
</feature>
<feature type="binding site" evidence="1">
    <location>
        <begin position="335"/>
        <end position="338"/>
    </location>
    <ligand>
        <name>GTP</name>
        <dbReference type="ChEBI" id="CHEBI:37565"/>
    </ligand>
</feature>
<feature type="binding site" evidence="1">
    <location>
        <begin position="358"/>
        <end position="360"/>
    </location>
    <ligand>
        <name>GTP</name>
        <dbReference type="ChEBI" id="CHEBI:37565"/>
    </ligand>
</feature>
<feature type="binding site" evidence="1">
    <location>
        <position position="454"/>
    </location>
    <ligand>
        <name>(6S)-5-formyl-5,6,7,8-tetrahydrofolate</name>
        <dbReference type="ChEBI" id="CHEBI:57457"/>
    </ligand>
</feature>
<name>MNME_SALEP</name>
<comment type="function">
    <text evidence="1">Exhibits a very high intrinsic GTPase hydrolysis rate. Involved in the addition of a carboxymethylaminomethyl (cmnm) group at the wobble position (U34) of certain tRNAs, forming tRNA-cmnm(5)s(2)U34.</text>
</comment>
<comment type="cofactor">
    <cofactor evidence="1">
        <name>K(+)</name>
        <dbReference type="ChEBI" id="CHEBI:29103"/>
    </cofactor>
    <text evidence="1">Binds 1 potassium ion per subunit.</text>
</comment>
<comment type="subunit">
    <text evidence="1">Homodimer. Heterotetramer of two MnmE and two MnmG subunits.</text>
</comment>
<comment type="subcellular location">
    <subcellularLocation>
        <location evidence="1">Cytoplasm</location>
    </subcellularLocation>
</comment>
<comment type="similarity">
    <text evidence="1">Belongs to the TRAFAC class TrmE-Era-EngA-EngB-Septin-like GTPase superfamily. TrmE GTPase family.</text>
</comment>
<protein>
    <recommendedName>
        <fullName evidence="1">tRNA modification GTPase MnmE</fullName>
        <ecNumber evidence="1">3.6.-.-</ecNumber>
    </recommendedName>
</protein>
<dbReference type="EC" id="3.6.-.-" evidence="1"/>
<dbReference type="EMBL" id="AM933172">
    <property type="protein sequence ID" value="CAR35236.1"/>
    <property type="molecule type" value="Genomic_DNA"/>
</dbReference>
<dbReference type="RefSeq" id="WP_000019081.1">
    <property type="nucleotide sequence ID" value="NC_011294.1"/>
</dbReference>
<dbReference type="SMR" id="B5QUQ5"/>
<dbReference type="KEGG" id="set:SEN3660"/>
<dbReference type="HOGENOM" id="CLU_019624_4_1_6"/>
<dbReference type="Proteomes" id="UP000000613">
    <property type="component" value="Chromosome"/>
</dbReference>
<dbReference type="GO" id="GO:0005829">
    <property type="term" value="C:cytosol"/>
    <property type="evidence" value="ECO:0007669"/>
    <property type="project" value="TreeGrafter"/>
</dbReference>
<dbReference type="GO" id="GO:0005525">
    <property type="term" value="F:GTP binding"/>
    <property type="evidence" value="ECO:0007669"/>
    <property type="project" value="UniProtKB-UniRule"/>
</dbReference>
<dbReference type="GO" id="GO:0003924">
    <property type="term" value="F:GTPase activity"/>
    <property type="evidence" value="ECO:0007669"/>
    <property type="project" value="UniProtKB-UniRule"/>
</dbReference>
<dbReference type="GO" id="GO:0046872">
    <property type="term" value="F:metal ion binding"/>
    <property type="evidence" value="ECO:0007669"/>
    <property type="project" value="UniProtKB-KW"/>
</dbReference>
<dbReference type="GO" id="GO:0030488">
    <property type="term" value="P:tRNA methylation"/>
    <property type="evidence" value="ECO:0007669"/>
    <property type="project" value="TreeGrafter"/>
</dbReference>
<dbReference type="GO" id="GO:0002098">
    <property type="term" value="P:tRNA wobble uridine modification"/>
    <property type="evidence" value="ECO:0007669"/>
    <property type="project" value="TreeGrafter"/>
</dbReference>
<dbReference type="CDD" id="cd04164">
    <property type="entry name" value="trmE"/>
    <property type="match status" value="1"/>
</dbReference>
<dbReference type="CDD" id="cd14858">
    <property type="entry name" value="TrmE_N"/>
    <property type="match status" value="1"/>
</dbReference>
<dbReference type="FunFam" id="3.30.1360.120:FF:000001">
    <property type="entry name" value="tRNA modification GTPase MnmE"/>
    <property type="match status" value="1"/>
</dbReference>
<dbReference type="FunFam" id="3.40.50.300:FF:000249">
    <property type="entry name" value="tRNA modification GTPase MnmE"/>
    <property type="match status" value="1"/>
</dbReference>
<dbReference type="Gene3D" id="3.40.50.300">
    <property type="entry name" value="P-loop containing nucleotide triphosphate hydrolases"/>
    <property type="match status" value="1"/>
</dbReference>
<dbReference type="Gene3D" id="3.30.1360.120">
    <property type="entry name" value="Probable tRNA modification gtpase trme, domain 1"/>
    <property type="match status" value="1"/>
</dbReference>
<dbReference type="Gene3D" id="1.20.120.430">
    <property type="entry name" value="tRNA modification GTPase MnmE domain 2"/>
    <property type="match status" value="1"/>
</dbReference>
<dbReference type="HAMAP" id="MF_00379">
    <property type="entry name" value="GTPase_MnmE"/>
    <property type="match status" value="1"/>
</dbReference>
<dbReference type="InterPro" id="IPR031168">
    <property type="entry name" value="G_TrmE"/>
</dbReference>
<dbReference type="InterPro" id="IPR006073">
    <property type="entry name" value="GTP-bd"/>
</dbReference>
<dbReference type="InterPro" id="IPR018948">
    <property type="entry name" value="GTP-bd_TrmE_N"/>
</dbReference>
<dbReference type="InterPro" id="IPR004520">
    <property type="entry name" value="GTPase_MnmE"/>
</dbReference>
<dbReference type="InterPro" id="IPR027368">
    <property type="entry name" value="MnmE_dom2"/>
</dbReference>
<dbReference type="InterPro" id="IPR025867">
    <property type="entry name" value="MnmE_helical"/>
</dbReference>
<dbReference type="InterPro" id="IPR027417">
    <property type="entry name" value="P-loop_NTPase"/>
</dbReference>
<dbReference type="InterPro" id="IPR005225">
    <property type="entry name" value="Small_GTP-bd"/>
</dbReference>
<dbReference type="InterPro" id="IPR027266">
    <property type="entry name" value="TrmE/GcvT_dom1"/>
</dbReference>
<dbReference type="NCBIfam" id="TIGR00450">
    <property type="entry name" value="mnmE_trmE_thdF"/>
    <property type="match status" value="1"/>
</dbReference>
<dbReference type="NCBIfam" id="NF003661">
    <property type="entry name" value="PRK05291.1-3"/>
    <property type="match status" value="1"/>
</dbReference>
<dbReference type="NCBIfam" id="TIGR00231">
    <property type="entry name" value="small_GTP"/>
    <property type="match status" value="1"/>
</dbReference>
<dbReference type="PANTHER" id="PTHR42714">
    <property type="entry name" value="TRNA MODIFICATION GTPASE GTPBP3"/>
    <property type="match status" value="1"/>
</dbReference>
<dbReference type="PANTHER" id="PTHR42714:SF2">
    <property type="entry name" value="TRNA MODIFICATION GTPASE GTPBP3, MITOCHONDRIAL"/>
    <property type="match status" value="1"/>
</dbReference>
<dbReference type="Pfam" id="PF01926">
    <property type="entry name" value="MMR_HSR1"/>
    <property type="match status" value="1"/>
</dbReference>
<dbReference type="Pfam" id="PF12631">
    <property type="entry name" value="MnmE_helical"/>
    <property type="match status" value="1"/>
</dbReference>
<dbReference type="Pfam" id="PF10396">
    <property type="entry name" value="TrmE_N"/>
    <property type="match status" value="1"/>
</dbReference>
<dbReference type="SUPFAM" id="SSF52540">
    <property type="entry name" value="P-loop containing nucleoside triphosphate hydrolases"/>
    <property type="match status" value="1"/>
</dbReference>
<dbReference type="SUPFAM" id="SSF116878">
    <property type="entry name" value="TrmE connector domain"/>
    <property type="match status" value="1"/>
</dbReference>
<dbReference type="PROSITE" id="PS51709">
    <property type="entry name" value="G_TRME"/>
    <property type="match status" value="1"/>
</dbReference>
<gene>
    <name evidence="1" type="primary">mnmE</name>
    <name evidence="1" type="synonym">trmE</name>
    <name type="ordered locus">SEN3660</name>
</gene>
<sequence>MSHNDTIVAQATPPGRGGVGILRISGLKARDVAQEVLGKLPKPRYADYLPFKDVDGSALDQGIALWFPGPNSFTGEDVLELQGHGGPVILDLLLKRILTLPGVRIARPGEFSERAFLNDKLDLAQAEAIADLIDASSEQAARSALNSLQGAFSARVNHLVEALTHLRIYVEAAIDFPDEEIDFLSDGKIEAQLNGVIADLDAVRTEARQGSLLREGMKVVIAGRPNAGKSSLLNALAGREAAIVTDIAGTTRDVLREHIHIDGMPLHIIDTAGLRDASDEVERIGIERAWQEIEQADRVLFMVDGTTTDAVDPADIWPDFIARLPKNLPITVVRNKADITGETLGISEVNGHSLVRLSARTGEGVDVLRNHLKQSMGFDTNMEGGFLARRRHLQALAEAAEHLEQGKAQLLGAWAGELLAEELRLAQQSLSEITGEFTSDDLLGRIFSSFCIGK</sequence>
<keyword id="KW-0963">Cytoplasm</keyword>
<keyword id="KW-0342">GTP-binding</keyword>
<keyword id="KW-0378">Hydrolase</keyword>
<keyword id="KW-0460">Magnesium</keyword>
<keyword id="KW-0479">Metal-binding</keyword>
<keyword id="KW-0547">Nucleotide-binding</keyword>
<keyword id="KW-0630">Potassium</keyword>
<keyword id="KW-0819">tRNA processing</keyword>
<evidence type="ECO:0000255" key="1">
    <source>
        <dbReference type="HAMAP-Rule" id="MF_00379"/>
    </source>
</evidence>